<dbReference type="EMBL" id="HM776217">
    <property type="protein sequence ID" value="AEF15912.1"/>
    <property type="molecule type" value="mRNA"/>
</dbReference>
<dbReference type="EMBL" id="AL035602">
    <property type="protein sequence ID" value="CAB38275.1"/>
    <property type="status" value="ALT_SEQ"/>
    <property type="molecule type" value="Genomic_DNA"/>
</dbReference>
<dbReference type="EMBL" id="AL161571">
    <property type="protein sequence ID" value="CAB81413.1"/>
    <property type="status" value="ALT_SEQ"/>
    <property type="molecule type" value="Genomic_DNA"/>
</dbReference>
<dbReference type="EMBL" id="CP002687">
    <property type="protein sequence ID" value="AEE85370.1"/>
    <property type="molecule type" value="Genomic_DNA"/>
</dbReference>
<dbReference type="EMBL" id="CP002687">
    <property type="protein sequence ID" value="AEE85371.1"/>
    <property type="molecule type" value="Genomic_DNA"/>
</dbReference>
<dbReference type="EMBL" id="CP002687">
    <property type="protein sequence ID" value="ANM67757.1"/>
    <property type="molecule type" value="Genomic_DNA"/>
</dbReference>
<dbReference type="EMBL" id="AK228729">
    <property type="protein sequence ID" value="BAF00631.1"/>
    <property type="molecule type" value="mRNA"/>
</dbReference>
<dbReference type="PIR" id="T05868">
    <property type="entry name" value="T05868"/>
</dbReference>
<dbReference type="RefSeq" id="NP_001320077.1">
    <molecule id="Q0WQG8-2"/>
    <property type="nucleotide sequence ID" value="NM_001341872.1"/>
</dbReference>
<dbReference type="RefSeq" id="NP_194493.2">
    <molecule id="Q0WQG8-1"/>
    <property type="nucleotide sequence ID" value="NM_118899.4"/>
</dbReference>
<dbReference type="RefSeq" id="NP_849555.1">
    <molecule id="Q0WQG8-2"/>
    <property type="nucleotide sequence ID" value="NM_179224.2"/>
</dbReference>
<dbReference type="SMR" id="Q0WQG8"/>
<dbReference type="BioGRID" id="14161">
    <property type="interactions" value="1"/>
</dbReference>
<dbReference type="FunCoup" id="Q0WQG8">
    <property type="interactions" value="2884"/>
</dbReference>
<dbReference type="IntAct" id="Q0WQG8">
    <property type="interactions" value="1"/>
</dbReference>
<dbReference type="STRING" id="3702.Q0WQG8"/>
<dbReference type="PaxDb" id="3702-AT4G27630.3"/>
<dbReference type="ProteomicsDB" id="247236">
    <molecule id="Q0WQG8-1"/>
</dbReference>
<dbReference type="EnsemblPlants" id="AT4G27630.1">
    <molecule id="Q0WQG8-2"/>
    <property type="protein sequence ID" value="AT4G27630.1"/>
    <property type="gene ID" value="AT4G27630"/>
</dbReference>
<dbReference type="EnsemblPlants" id="AT4G27630.2">
    <molecule id="Q0WQG8-1"/>
    <property type="protein sequence ID" value="AT4G27630.2"/>
    <property type="gene ID" value="AT4G27630"/>
</dbReference>
<dbReference type="EnsemblPlants" id="AT4G27630.6">
    <molecule id="Q0WQG8-2"/>
    <property type="protein sequence ID" value="AT4G27630.6"/>
    <property type="gene ID" value="AT4G27630"/>
</dbReference>
<dbReference type="GeneID" id="828874"/>
<dbReference type="Gramene" id="AT4G27630.1">
    <molecule id="Q0WQG8-2"/>
    <property type="protein sequence ID" value="AT4G27630.1"/>
    <property type="gene ID" value="AT4G27630"/>
</dbReference>
<dbReference type="Gramene" id="AT4G27630.2">
    <molecule id="Q0WQG8-1"/>
    <property type="protein sequence ID" value="AT4G27630.2"/>
    <property type="gene ID" value="AT4G27630"/>
</dbReference>
<dbReference type="Gramene" id="AT4G27630.6">
    <molecule id="Q0WQG8-2"/>
    <property type="protein sequence ID" value="AT4G27630.6"/>
    <property type="gene ID" value="AT4G27630"/>
</dbReference>
<dbReference type="KEGG" id="ath:AT4G27630"/>
<dbReference type="Araport" id="AT4G27630"/>
<dbReference type="TAIR" id="AT4G27630">
    <property type="gene designation" value="GTG2"/>
</dbReference>
<dbReference type="eggNOG" id="KOG2417">
    <property type="taxonomic scope" value="Eukaryota"/>
</dbReference>
<dbReference type="HOGENOM" id="CLU_030540_1_0_1"/>
<dbReference type="InParanoid" id="Q0WQG8"/>
<dbReference type="OMA" id="FSVYCVY"/>
<dbReference type="PhylomeDB" id="Q0WQG8"/>
<dbReference type="PRO" id="PR:Q0WQG8"/>
<dbReference type="Proteomes" id="UP000006548">
    <property type="component" value="Chromosome 4"/>
</dbReference>
<dbReference type="ExpressionAtlas" id="Q0WQG8">
    <property type="expression patterns" value="baseline and differential"/>
</dbReference>
<dbReference type="GO" id="GO:0005789">
    <property type="term" value="C:endoplasmic reticulum membrane"/>
    <property type="evidence" value="ECO:0007669"/>
    <property type="project" value="UniProtKB-SubCell"/>
</dbReference>
<dbReference type="GO" id="GO:0000139">
    <property type="term" value="C:Golgi membrane"/>
    <property type="evidence" value="ECO:0007669"/>
    <property type="project" value="UniProtKB-SubCell"/>
</dbReference>
<dbReference type="GO" id="GO:0005886">
    <property type="term" value="C:plasma membrane"/>
    <property type="evidence" value="ECO:0007669"/>
    <property type="project" value="UniProtKB-SubCell"/>
</dbReference>
<dbReference type="GO" id="GO:0005525">
    <property type="term" value="F:GTP binding"/>
    <property type="evidence" value="ECO:0007669"/>
    <property type="project" value="UniProtKB-KW"/>
</dbReference>
<dbReference type="InterPro" id="IPR025969">
    <property type="entry name" value="ABA_GPCR_dom"/>
</dbReference>
<dbReference type="InterPro" id="IPR022535">
    <property type="entry name" value="Golgi_pH-regulator_cons_dom"/>
</dbReference>
<dbReference type="InterPro" id="IPR015672">
    <property type="entry name" value="GPHR/GTG"/>
</dbReference>
<dbReference type="PANTHER" id="PTHR15948">
    <property type="entry name" value="G-PROTEIN COUPLED RECEPTOR 89-RELATED"/>
    <property type="match status" value="1"/>
</dbReference>
<dbReference type="PANTHER" id="PTHR15948:SF7">
    <property type="entry name" value="GPCR-TYPE G PROTEIN 2"/>
    <property type="match status" value="1"/>
</dbReference>
<dbReference type="Pfam" id="PF12430">
    <property type="entry name" value="ABA_GPCR"/>
    <property type="match status" value="1"/>
</dbReference>
<dbReference type="Pfam" id="PF12537">
    <property type="entry name" value="GPHR_N"/>
    <property type="match status" value="1"/>
</dbReference>
<dbReference type="PROSITE" id="PS00107">
    <property type="entry name" value="PROTEIN_KINASE_ATP"/>
    <property type="match status" value="1"/>
</dbReference>
<name>GTG2_ARATH</name>
<evidence type="ECO:0000255" key="1"/>
<evidence type="ECO:0000269" key="2">
    <source>
    </source>
</evidence>
<evidence type="ECO:0000269" key="3">
    <source>
    </source>
</evidence>
<evidence type="ECO:0000305" key="4"/>
<protein>
    <recommendedName>
        <fullName>GPCR-type G protein 2</fullName>
    </recommendedName>
</protein>
<feature type="chain" id="PRO_0000367059" description="GPCR-type G protein 2">
    <location>
        <begin position="1"/>
        <end position="467"/>
    </location>
</feature>
<feature type="transmembrane region" description="Helical" evidence="1">
    <location>
        <begin position="7"/>
        <end position="27"/>
    </location>
</feature>
<feature type="transmembrane region" description="Helical" evidence="1">
    <location>
        <begin position="45"/>
        <end position="65"/>
    </location>
</feature>
<feature type="transmembrane region" description="Helical" evidence="1">
    <location>
        <begin position="82"/>
        <end position="102"/>
    </location>
</feature>
<feature type="transmembrane region" description="Helical" evidence="1">
    <location>
        <begin position="112"/>
        <end position="132"/>
    </location>
</feature>
<feature type="transmembrane region" description="Helical" evidence="1">
    <location>
        <begin position="152"/>
        <end position="172"/>
    </location>
</feature>
<feature type="transmembrane region" description="Helical" evidence="1">
    <location>
        <begin position="296"/>
        <end position="318"/>
    </location>
</feature>
<feature type="transmembrane region" description="Helical" evidence="1">
    <location>
        <begin position="322"/>
        <end position="342"/>
    </location>
</feature>
<feature type="transmembrane region" description="Helical" evidence="1">
    <location>
        <begin position="344"/>
        <end position="364"/>
    </location>
</feature>
<feature type="transmembrane region" description="Helical" evidence="1">
    <location>
        <begin position="388"/>
        <end position="408"/>
    </location>
</feature>
<feature type="transmembrane region" description="Helical" evidence="1">
    <location>
        <begin position="436"/>
        <end position="456"/>
    </location>
</feature>
<feature type="coiled-coil region" evidence="1">
    <location>
        <begin position="243"/>
        <end position="276"/>
    </location>
</feature>
<feature type="binding site" evidence="4">
    <location>
        <begin position="381"/>
        <end position="410"/>
    </location>
    <ligand>
        <name>GTP</name>
        <dbReference type="ChEBI" id="CHEBI:37565"/>
    </ligand>
</feature>
<feature type="splice variant" id="VSP_036623" description="In isoform 2." evidence="4">
    <location>
        <begin position="1"/>
        <end position="119"/>
    </location>
</feature>
<feature type="splice variant" id="VSP_036624" description="In isoform 2." evidence="4">
    <original>LTAFLYAFWRMGIHFPMPSD</original>
    <variation>MLKILSPTCWTTLLKHPFIL</variation>
    <location>
        <begin position="120"/>
        <end position="139"/>
    </location>
</feature>
<feature type="sequence conflict" description="In Ref. 4; BAF00631." evidence="4" ref="4">
    <original>E</original>
    <variation>G</variation>
    <location>
        <position position="72"/>
    </location>
</feature>
<proteinExistence type="evidence at protein level"/>
<comment type="function">
    <text evidence="2 3">Abscisic acid receptor. The GDP-bound form exhibits greater abscisic acid binding than the GTP-bound form (PubMed:19135895). Required for seedling growth and fertility (PubMed:23001037).</text>
</comment>
<comment type="activity regulation">
    <text>The GTPase activity is Mg(2+) dependent and is strongly inhibited by the interaction with GPA1.</text>
</comment>
<comment type="subunit">
    <text evidence="2">Interacts with GPA1.</text>
</comment>
<comment type="interaction">
    <interactant intactId="EBI-2214623">
        <id>Q0WQG8</id>
    </interactant>
    <interactant intactId="EBI-443890">
        <id>P18064</id>
        <label>GPA1</label>
    </interactant>
    <organismsDiffer>false</organismsDiffer>
    <experiments>2</experiments>
</comment>
<comment type="subcellular location">
    <subcellularLocation>
        <location evidence="2">Cell membrane</location>
        <topology evidence="2">Multi-pass membrane protein</topology>
    </subcellularLocation>
    <subcellularLocation>
        <location evidence="3">Golgi apparatus membrane</location>
        <topology evidence="1">Multi-pass membrane protein</topology>
    </subcellularLocation>
    <subcellularLocation>
        <location evidence="3">Endoplasmic reticulum membrane</location>
        <topology evidence="1">Multi-pass membrane protein</topology>
    </subcellularLocation>
</comment>
<comment type="alternative products">
    <event type="alternative splicing"/>
    <isoform>
        <id>Q0WQG8-1</id>
        <name>1</name>
        <sequence type="displayed"/>
    </isoform>
    <isoform>
        <id>Q0WQG8-2</id>
        <name>2</name>
        <sequence type="described" ref="VSP_036623 VSP_036624"/>
    </isoform>
</comment>
<comment type="tissue specificity">
    <text evidence="2">Expressed in cotyledons, leaves, stems, roots, flowers and guard cells.</text>
</comment>
<comment type="induction">
    <text evidence="2">Not induced by abscisic acid, cold, salt or drought treatments.</text>
</comment>
<comment type="disruption phenotype">
    <text evidence="2">No visible phenotype; due to the redundancy with GTG1. The double mutants gtg1 and gtg2 are hyposensitive to abscisic acid.</text>
</comment>
<comment type="miscellaneous">
    <text>Has both a topology similar to GPCRs and a GTP-binding/GTPase activity.</text>
</comment>
<comment type="similarity">
    <text evidence="4">Belongs to the Golgi pH regulator (TC 1.A.38) family.</text>
</comment>
<comment type="sequence caution" evidence="4">
    <conflict type="erroneous gene model prediction">
        <sequence resource="EMBL-CDS" id="CAB38275"/>
    </conflict>
</comment>
<comment type="sequence caution" evidence="4">
    <conflict type="erroneous gene model prediction">
        <sequence resource="EMBL-CDS" id="CAB81413"/>
    </conflict>
</comment>
<keyword id="KW-0025">Alternative splicing</keyword>
<keyword id="KW-1003">Cell membrane</keyword>
<keyword id="KW-0175">Coiled coil</keyword>
<keyword id="KW-0256">Endoplasmic reticulum</keyword>
<keyword id="KW-0333">Golgi apparatus</keyword>
<keyword id="KW-0342">GTP-binding</keyword>
<keyword id="KW-0472">Membrane</keyword>
<keyword id="KW-0547">Nucleotide-binding</keyword>
<keyword id="KW-0675">Receptor</keyword>
<keyword id="KW-1185">Reference proteome</keyword>
<keyword id="KW-0812">Transmembrane</keyword>
<keyword id="KW-1133">Transmembrane helix</keyword>
<gene>
    <name type="primary">GTG2</name>
    <name type="ordered locus">At4g27630</name>
    <name type="ORF">T29A15.120</name>
</gene>
<sequence length="467" mass="53514">MGYGWGIFEGMLVIGSLCLLGSAGLWFLNRRLYKEYEEKRALVQIIFSVVFAFSCNLLQLVLFEIIPVLSREARMVNWKVDLFCLIVLLVFMLPYYHCYLMLRNTGVRRERAAVGALLFLTAFLYAFWRMGIHFPMPSDKGFFSMPQLVSRIGVIGVTLMAVLSGFGAVNLPYSYISLFIREIEESEIKSLERQLMQSMETCIAKKKKILLCQVEVERSLVSEEHQKGKSFFRRFVGTVVRSVQDDQKEQDIKLMEAEVEGLEELSKQLFLEIYELRQAKDAAAFSRTWKGHVQNFLGYACSIYCVYKMLKSLQSVVFKEAGTKDPVTMMISIFLQFFDIGVDAALLSQYISLLFIGMLIVISVRGFLTNLMKFFFAVSRVGSGSSSNVVLFLSEIMGMYFLSSILLIRKSLRNEYRGIITDVLGGDIQFDFYHRWFDAIFVASAFLSLLLLSAHYTSRQIDKHPID</sequence>
<reference key="1">
    <citation type="journal article" date="2012" name="Plant Cell">
        <title>G protein-coupled receptor-type G proteins are required for light-dependent seedling growth and fertility in Arabidopsis.</title>
        <authorList>
            <person name="Jaffe F.W."/>
            <person name="Freschet G.E."/>
            <person name="Valdes B.M."/>
            <person name="Runions J."/>
            <person name="Terry M.J."/>
            <person name="Williams L.E."/>
        </authorList>
    </citation>
    <scope>NUCLEOTIDE SEQUENCE [MRNA]</scope>
    <scope>FUNCTION</scope>
    <scope>SUBCELLULAR LOCATION</scope>
</reference>
<reference key="2">
    <citation type="journal article" date="1999" name="Nature">
        <title>Sequence and analysis of chromosome 4 of the plant Arabidopsis thaliana.</title>
        <authorList>
            <person name="Mayer K.F.X."/>
            <person name="Schueller C."/>
            <person name="Wambutt R."/>
            <person name="Murphy G."/>
            <person name="Volckaert G."/>
            <person name="Pohl T."/>
            <person name="Duesterhoeft A."/>
            <person name="Stiekema W."/>
            <person name="Entian K.-D."/>
            <person name="Terryn N."/>
            <person name="Harris B."/>
            <person name="Ansorge W."/>
            <person name="Brandt P."/>
            <person name="Grivell L.A."/>
            <person name="Rieger M."/>
            <person name="Weichselgartner M."/>
            <person name="de Simone V."/>
            <person name="Obermaier B."/>
            <person name="Mache R."/>
            <person name="Mueller M."/>
            <person name="Kreis M."/>
            <person name="Delseny M."/>
            <person name="Puigdomenech P."/>
            <person name="Watson M."/>
            <person name="Schmidtheini T."/>
            <person name="Reichert B."/>
            <person name="Portetelle D."/>
            <person name="Perez-Alonso M."/>
            <person name="Boutry M."/>
            <person name="Bancroft I."/>
            <person name="Vos P."/>
            <person name="Hoheisel J."/>
            <person name="Zimmermann W."/>
            <person name="Wedler H."/>
            <person name="Ridley P."/>
            <person name="Langham S.-A."/>
            <person name="McCullagh B."/>
            <person name="Bilham L."/>
            <person name="Robben J."/>
            <person name="van der Schueren J."/>
            <person name="Grymonprez B."/>
            <person name="Chuang Y.-J."/>
            <person name="Vandenbussche F."/>
            <person name="Braeken M."/>
            <person name="Weltjens I."/>
            <person name="Voet M."/>
            <person name="Bastiaens I."/>
            <person name="Aert R."/>
            <person name="Defoor E."/>
            <person name="Weitzenegger T."/>
            <person name="Bothe G."/>
            <person name="Ramsperger U."/>
            <person name="Hilbert H."/>
            <person name="Braun M."/>
            <person name="Holzer E."/>
            <person name="Brandt A."/>
            <person name="Peters S."/>
            <person name="van Staveren M."/>
            <person name="Dirkse W."/>
            <person name="Mooijman P."/>
            <person name="Klein Lankhorst R."/>
            <person name="Rose M."/>
            <person name="Hauf J."/>
            <person name="Koetter P."/>
            <person name="Berneiser S."/>
            <person name="Hempel S."/>
            <person name="Feldpausch M."/>
            <person name="Lamberth S."/>
            <person name="Van den Daele H."/>
            <person name="De Keyser A."/>
            <person name="Buysshaert C."/>
            <person name="Gielen J."/>
            <person name="Villarroel R."/>
            <person name="De Clercq R."/>
            <person name="van Montagu M."/>
            <person name="Rogers J."/>
            <person name="Cronin A."/>
            <person name="Quail M.A."/>
            <person name="Bray-Allen S."/>
            <person name="Clark L."/>
            <person name="Doggett J."/>
            <person name="Hall S."/>
            <person name="Kay M."/>
            <person name="Lennard N."/>
            <person name="McLay K."/>
            <person name="Mayes R."/>
            <person name="Pettett A."/>
            <person name="Rajandream M.A."/>
            <person name="Lyne M."/>
            <person name="Benes V."/>
            <person name="Rechmann S."/>
            <person name="Borkova D."/>
            <person name="Bloecker H."/>
            <person name="Scharfe M."/>
            <person name="Grimm M."/>
            <person name="Loehnert T.-H."/>
            <person name="Dose S."/>
            <person name="de Haan M."/>
            <person name="Maarse A.C."/>
            <person name="Schaefer M."/>
            <person name="Mueller-Auer S."/>
            <person name="Gabel C."/>
            <person name="Fuchs M."/>
            <person name="Fartmann B."/>
            <person name="Granderath K."/>
            <person name="Dauner D."/>
            <person name="Herzl A."/>
            <person name="Neumann S."/>
            <person name="Argiriou A."/>
            <person name="Vitale D."/>
            <person name="Liguori R."/>
            <person name="Piravandi E."/>
            <person name="Massenet O."/>
            <person name="Quigley F."/>
            <person name="Clabauld G."/>
            <person name="Muendlein A."/>
            <person name="Felber R."/>
            <person name="Schnabl S."/>
            <person name="Hiller R."/>
            <person name="Schmidt W."/>
            <person name="Lecharny A."/>
            <person name="Aubourg S."/>
            <person name="Chefdor F."/>
            <person name="Cooke R."/>
            <person name="Berger C."/>
            <person name="Monfort A."/>
            <person name="Casacuberta E."/>
            <person name="Gibbons T."/>
            <person name="Weber N."/>
            <person name="Vandenbol M."/>
            <person name="Bargues M."/>
            <person name="Terol J."/>
            <person name="Torres A."/>
            <person name="Perez-Perez A."/>
            <person name="Purnelle B."/>
            <person name="Bent E."/>
            <person name="Johnson S."/>
            <person name="Tacon D."/>
            <person name="Jesse T."/>
            <person name="Heijnen L."/>
            <person name="Schwarz S."/>
            <person name="Scholler P."/>
            <person name="Heber S."/>
            <person name="Francs P."/>
            <person name="Bielke C."/>
            <person name="Frishman D."/>
            <person name="Haase D."/>
            <person name="Lemcke K."/>
            <person name="Mewes H.-W."/>
            <person name="Stocker S."/>
            <person name="Zaccaria P."/>
            <person name="Bevan M."/>
            <person name="Wilson R.K."/>
            <person name="de la Bastide M."/>
            <person name="Habermann K."/>
            <person name="Parnell L."/>
            <person name="Dedhia N."/>
            <person name="Gnoj L."/>
            <person name="Schutz K."/>
            <person name="Huang E."/>
            <person name="Spiegel L."/>
            <person name="Sekhon M."/>
            <person name="Murray J."/>
            <person name="Sheet P."/>
            <person name="Cordes M."/>
            <person name="Abu-Threideh J."/>
            <person name="Stoneking T."/>
            <person name="Kalicki J."/>
            <person name="Graves T."/>
            <person name="Harmon G."/>
            <person name="Edwards J."/>
            <person name="Latreille P."/>
            <person name="Courtney L."/>
            <person name="Cloud J."/>
            <person name="Abbott A."/>
            <person name="Scott K."/>
            <person name="Johnson D."/>
            <person name="Minx P."/>
            <person name="Bentley D."/>
            <person name="Fulton B."/>
            <person name="Miller N."/>
            <person name="Greco T."/>
            <person name="Kemp K."/>
            <person name="Kramer J."/>
            <person name="Fulton L."/>
            <person name="Mardis E."/>
            <person name="Dante M."/>
            <person name="Pepin K."/>
            <person name="Hillier L.W."/>
            <person name="Nelson J."/>
            <person name="Spieth J."/>
            <person name="Ryan E."/>
            <person name="Andrews S."/>
            <person name="Geisel C."/>
            <person name="Layman D."/>
            <person name="Du H."/>
            <person name="Ali J."/>
            <person name="Berghoff A."/>
            <person name="Jones K."/>
            <person name="Drone K."/>
            <person name="Cotton M."/>
            <person name="Joshu C."/>
            <person name="Antonoiu B."/>
            <person name="Zidanic M."/>
            <person name="Strong C."/>
            <person name="Sun H."/>
            <person name="Lamar B."/>
            <person name="Yordan C."/>
            <person name="Ma P."/>
            <person name="Zhong J."/>
            <person name="Preston R."/>
            <person name="Vil D."/>
            <person name="Shekher M."/>
            <person name="Matero A."/>
            <person name="Shah R."/>
            <person name="Swaby I.K."/>
            <person name="O'Shaughnessy A."/>
            <person name="Rodriguez M."/>
            <person name="Hoffman J."/>
            <person name="Till S."/>
            <person name="Granat S."/>
            <person name="Shohdy N."/>
            <person name="Hasegawa A."/>
            <person name="Hameed A."/>
            <person name="Lodhi M."/>
            <person name="Johnson A."/>
            <person name="Chen E."/>
            <person name="Marra M.A."/>
            <person name="Martienssen R."/>
            <person name="McCombie W.R."/>
        </authorList>
    </citation>
    <scope>NUCLEOTIDE SEQUENCE [LARGE SCALE GENOMIC DNA]</scope>
    <source>
        <strain>cv. Columbia</strain>
    </source>
</reference>
<reference key="3">
    <citation type="journal article" date="2017" name="Plant J.">
        <title>Araport11: a complete reannotation of the Arabidopsis thaliana reference genome.</title>
        <authorList>
            <person name="Cheng C.Y."/>
            <person name="Krishnakumar V."/>
            <person name="Chan A.P."/>
            <person name="Thibaud-Nissen F."/>
            <person name="Schobel S."/>
            <person name="Town C.D."/>
        </authorList>
    </citation>
    <scope>GENOME REANNOTATION</scope>
    <source>
        <strain>cv. Columbia</strain>
    </source>
</reference>
<reference key="4">
    <citation type="submission" date="2006-07" db="EMBL/GenBank/DDBJ databases">
        <title>Large-scale analysis of RIKEN Arabidopsis full-length (RAFL) cDNAs.</title>
        <authorList>
            <person name="Totoki Y."/>
            <person name="Seki M."/>
            <person name="Ishida J."/>
            <person name="Nakajima M."/>
            <person name="Enju A."/>
            <person name="Kamiya A."/>
            <person name="Narusaka M."/>
            <person name="Shin-i T."/>
            <person name="Nakagawa M."/>
            <person name="Sakamoto N."/>
            <person name="Oishi K."/>
            <person name="Kohara Y."/>
            <person name="Kobayashi M."/>
            <person name="Toyoda A."/>
            <person name="Sakaki Y."/>
            <person name="Sakurai T."/>
            <person name="Iida K."/>
            <person name="Akiyama K."/>
            <person name="Satou M."/>
            <person name="Toyoda T."/>
            <person name="Konagaya A."/>
            <person name="Carninci P."/>
            <person name="Kawai J."/>
            <person name="Hayashizaki Y."/>
            <person name="Shinozaki K."/>
        </authorList>
    </citation>
    <scope>NUCLEOTIDE SEQUENCE [LARGE SCALE MRNA] (ISOFORM 1)</scope>
    <source>
        <strain>cv. Columbia</strain>
    </source>
</reference>
<reference key="5">
    <citation type="journal article" date="2009" name="Cell">
        <title>Two novel GPCR-type G proteins are abscisic acid receptors in Arabidopsis.</title>
        <authorList>
            <person name="Pandey S."/>
            <person name="Nelson D.C."/>
            <person name="Assmann S.M."/>
        </authorList>
    </citation>
    <scope>FUNCTION</scope>
    <scope>TISSUE SPECIFICITY</scope>
    <scope>SUBCELLULAR LOCATION</scope>
    <scope>INDUCTION</scope>
    <scope>INTERACTION WITH GPA1</scope>
    <scope>DISRUPTION PHENOTYPE</scope>
</reference>
<accession>Q0WQG8</accession>
<accession>G0WVT7</accession>
<accession>Q304A2</accession>
<accession>Q3E9V6</accession>
<accession>Q9T087</accession>
<organism>
    <name type="scientific">Arabidopsis thaliana</name>
    <name type="common">Mouse-ear cress</name>
    <dbReference type="NCBI Taxonomy" id="3702"/>
    <lineage>
        <taxon>Eukaryota</taxon>
        <taxon>Viridiplantae</taxon>
        <taxon>Streptophyta</taxon>
        <taxon>Embryophyta</taxon>
        <taxon>Tracheophyta</taxon>
        <taxon>Spermatophyta</taxon>
        <taxon>Magnoliopsida</taxon>
        <taxon>eudicotyledons</taxon>
        <taxon>Gunneridae</taxon>
        <taxon>Pentapetalae</taxon>
        <taxon>rosids</taxon>
        <taxon>malvids</taxon>
        <taxon>Brassicales</taxon>
        <taxon>Brassicaceae</taxon>
        <taxon>Camelineae</taxon>
        <taxon>Arabidopsis</taxon>
    </lineage>
</organism>